<gene>
    <name evidence="9" type="primary">Lsd-1</name>
    <name type="ORF">CG10374</name>
</gene>
<feature type="chain" id="PRO_0000099894" description="Lipid storage droplets surface-binding protein 1">
    <location>
        <begin position="1"/>
        <end position="431"/>
    </location>
</feature>
<feature type="region of interest" description="Disordered" evidence="1">
    <location>
        <begin position="397"/>
        <end position="431"/>
    </location>
</feature>
<feature type="compositionally biased region" description="Polar residues" evidence="1">
    <location>
        <begin position="418"/>
        <end position="431"/>
    </location>
</feature>
<feature type="splice variant" id="VSP_051638" description="In isoform B." evidence="5">
    <location>
        <begin position="1"/>
        <end position="80"/>
    </location>
</feature>
<feature type="splice variant" id="VSP_051639" description="In isoform C and isoform B." evidence="6 7">
    <original>VKKLVSALNDNFSPIRQQLNRMFGHKS</original>
    <variation>G</variation>
    <location>
        <begin position="172"/>
        <end position="198"/>
    </location>
</feature>
<accession>Q9VCI3</accession>
<accession>Q7KS41</accession>
<accession>Q9BIJ6</accession>
<accession>Q9VCI1</accession>
<accession>Q9VCI2</accession>
<sequence length="431" mass="48833">MATATSGSGLHLEAIDRIGSIPLVESSVKRVETIYDKVKNNNRLFSWYFETAEATISAAYETIQPAVKLFEPSIQRLDNVMCKSLDILEQRIPLVYLPPEMMYWNTKEYMSDHLVRPVLKRADSVKQIGNAVLESPLTTYAAERIDGAFTVGDKFVDKYLVPIQTDQDQTDVKKLVSALNDNFSPIRQQLNRMFGHKSPQEDDNEAVPDERGAIKAIHHGQRFSRKLKRRLTQRTIAEARALKKQSKEAIHVLFYAAELIATDPKQAVQKAKELWVYLSADEPENQARPATLEQLIVLLTRESARRVVHLVNFSAHVAANIPRNLAHTTTEVAHHIIYINHRIITISRLDKVKTISKEEAESLFKRMLAFYGSLQGLTNAYLERVASFLSGRMEAEKVTGSDGGNSNHRSSRRRQDPNHYSATHNNINGVY</sequence>
<evidence type="ECO:0000256" key="1">
    <source>
        <dbReference type="SAM" id="MobiDB-lite"/>
    </source>
</evidence>
<evidence type="ECO:0000269" key="2">
    <source>
    </source>
</evidence>
<evidence type="ECO:0000269" key="3">
    <source>
    </source>
</evidence>
<evidence type="ECO:0000269" key="4">
    <source>
    </source>
</evidence>
<evidence type="ECO:0000303" key="5">
    <source>
    </source>
</evidence>
<evidence type="ECO:0000303" key="6">
    <source>
    </source>
</evidence>
<evidence type="ECO:0000303" key="7">
    <source>
    </source>
</evidence>
<evidence type="ECO:0000305" key="8"/>
<evidence type="ECO:0000312" key="9">
    <source>
        <dbReference type="EMBL" id="AAF56183.2"/>
    </source>
</evidence>
<evidence type="ECO:0000312" key="10">
    <source>
        <dbReference type="EMBL" id="AAK27222.1"/>
    </source>
</evidence>
<evidence type="ECO:0000312" key="11">
    <source>
        <dbReference type="EMBL" id="AAK92860.1"/>
    </source>
</evidence>
<dbReference type="EMBL" id="AF357214">
    <property type="protein sequence ID" value="AAK27222.1"/>
    <property type="molecule type" value="mRNA"/>
</dbReference>
<dbReference type="EMBL" id="AE014297">
    <property type="protein sequence ID" value="AAF56182.2"/>
    <property type="molecule type" value="Genomic_DNA"/>
</dbReference>
<dbReference type="EMBL" id="AE014297">
    <property type="protein sequence ID" value="AAF56183.2"/>
    <property type="molecule type" value="Genomic_DNA"/>
</dbReference>
<dbReference type="EMBL" id="AE014297">
    <property type="protein sequence ID" value="AAF56184.2"/>
    <property type="molecule type" value="Genomic_DNA"/>
</dbReference>
<dbReference type="EMBL" id="AY051436">
    <property type="protein sequence ID" value="AAK92860.1"/>
    <property type="molecule type" value="mRNA"/>
</dbReference>
<dbReference type="RefSeq" id="NP_001262883.1">
    <molecule id="Q9VCI3-3"/>
    <property type="nucleotide sequence ID" value="NM_001275954.1"/>
</dbReference>
<dbReference type="RefSeq" id="NP_651183.3">
    <molecule id="Q9VCI3-3"/>
    <property type="nucleotide sequence ID" value="NM_142926.4"/>
</dbReference>
<dbReference type="RefSeq" id="NP_732904.2">
    <molecule id="Q9VCI3-1"/>
    <property type="nucleotide sequence ID" value="NM_170092.3"/>
</dbReference>
<dbReference type="RefSeq" id="NP_732905.2">
    <molecule id="Q9VCI3-2"/>
    <property type="nucleotide sequence ID" value="NM_170093.3"/>
</dbReference>
<dbReference type="BioGRID" id="67748">
    <property type="interactions" value="10"/>
</dbReference>
<dbReference type="FunCoup" id="Q9VCI3">
    <property type="interactions" value="1"/>
</dbReference>
<dbReference type="IntAct" id="Q9VCI3">
    <property type="interactions" value="1"/>
</dbReference>
<dbReference type="STRING" id="7227.FBpp0083846"/>
<dbReference type="iPTMnet" id="Q9VCI3"/>
<dbReference type="PaxDb" id="7227-FBpp0083846"/>
<dbReference type="DNASU" id="42810"/>
<dbReference type="EnsemblMetazoa" id="FBtr0084455">
    <molecule id="Q9VCI3-1"/>
    <property type="protein sequence ID" value="FBpp0083846"/>
    <property type="gene ID" value="FBgn0039114"/>
</dbReference>
<dbReference type="EnsemblMetazoa" id="FBtr0084456">
    <molecule id="Q9VCI3-3"/>
    <property type="protein sequence ID" value="FBpp0083847"/>
    <property type="gene ID" value="FBgn0039114"/>
</dbReference>
<dbReference type="EnsemblMetazoa" id="FBtr0084457">
    <molecule id="Q9VCI3-2"/>
    <property type="protein sequence ID" value="FBpp0083848"/>
    <property type="gene ID" value="FBgn0039114"/>
</dbReference>
<dbReference type="EnsemblMetazoa" id="FBtr0335002">
    <molecule id="Q9VCI3-3"/>
    <property type="protein sequence ID" value="FBpp0307010"/>
    <property type="gene ID" value="FBgn0039114"/>
</dbReference>
<dbReference type="GeneID" id="42810"/>
<dbReference type="KEGG" id="dme:Dmel_CG10374"/>
<dbReference type="AGR" id="FB:FBgn0039114"/>
<dbReference type="CTD" id="42810"/>
<dbReference type="FlyBase" id="FBgn0039114">
    <property type="gene designation" value="Lsd-1"/>
</dbReference>
<dbReference type="VEuPathDB" id="VectorBase:FBgn0039114"/>
<dbReference type="eggNOG" id="ENOG502QRYF">
    <property type="taxonomic scope" value="Eukaryota"/>
</dbReference>
<dbReference type="InParanoid" id="Q9VCI3"/>
<dbReference type="OMA" id="GQCNPKT"/>
<dbReference type="OrthoDB" id="376826at2759"/>
<dbReference type="PhylomeDB" id="Q9VCI3"/>
<dbReference type="Reactome" id="R-DME-6811440">
    <property type="pathway name" value="Retrograde transport at the Trans-Golgi-Network"/>
</dbReference>
<dbReference type="Reactome" id="R-DME-9706019">
    <property type="pathway name" value="RHOBTB3 ATPase cycle"/>
</dbReference>
<dbReference type="BioGRID-ORCS" id="42810">
    <property type="hits" value="0 hits in 3 CRISPR screens"/>
</dbReference>
<dbReference type="GenomeRNAi" id="42810"/>
<dbReference type="PRO" id="PR:Q9VCI3"/>
<dbReference type="Proteomes" id="UP000000803">
    <property type="component" value="Chromosome 3R"/>
</dbReference>
<dbReference type="Bgee" id="FBgn0039114">
    <property type="expression patterns" value="Expressed in fat body cell in dorsal vessel heart and 66 other cell types or tissues"/>
</dbReference>
<dbReference type="ExpressionAtlas" id="Q9VCI3">
    <property type="expression patterns" value="baseline and differential"/>
</dbReference>
<dbReference type="GO" id="GO:0005829">
    <property type="term" value="C:cytosol"/>
    <property type="evidence" value="ECO:0000318"/>
    <property type="project" value="GO_Central"/>
</dbReference>
<dbReference type="GO" id="GO:0005811">
    <property type="term" value="C:lipid droplet"/>
    <property type="evidence" value="ECO:0000314"/>
    <property type="project" value="UniProtKB"/>
</dbReference>
<dbReference type="GO" id="GO:0032994">
    <property type="term" value="C:protein-lipid complex"/>
    <property type="evidence" value="ECO:0000314"/>
    <property type="project" value="FlyBase"/>
</dbReference>
<dbReference type="GO" id="GO:0034389">
    <property type="term" value="P:lipid droplet organization"/>
    <property type="evidence" value="ECO:0000315"/>
    <property type="project" value="UniProtKB"/>
</dbReference>
<dbReference type="GO" id="GO:0019915">
    <property type="term" value="P:lipid storage"/>
    <property type="evidence" value="ECO:0000270"/>
    <property type="project" value="UniProtKB"/>
</dbReference>
<dbReference type="GO" id="GO:0006869">
    <property type="term" value="P:lipid transport"/>
    <property type="evidence" value="ECO:0000270"/>
    <property type="project" value="UniProtKB"/>
</dbReference>
<dbReference type="GO" id="GO:0010898">
    <property type="term" value="P:positive regulation of triglyceride catabolic process"/>
    <property type="evidence" value="ECO:0000314"/>
    <property type="project" value="FlyBase"/>
</dbReference>
<dbReference type="GO" id="GO:0010890">
    <property type="term" value="P:positive regulation of triglyceride storage"/>
    <property type="evidence" value="ECO:0000318"/>
    <property type="project" value="GO_Central"/>
</dbReference>
<dbReference type="GO" id="GO:1990044">
    <property type="term" value="P:protein localization to lipid droplet"/>
    <property type="evidence" value="ECO:0000315"/>
    <property type="project" value="FlyBase"/>
</dbReference>
<dbReference type="GO" id="GO:0010883">
    <property type="term" value="P:regulation of lipid storage"/>
    <property type="evidence" value="ECO:0000315"/>
    <property type="project" value="FlyBase"/>
</dbReference>
<dbReference type="GO" id="GO:0006642">
    <property type="term" value="P:triglyceride mobilization"/>
    <property type="evidence" value="ECO:0000315"/>
    <property type="project" value="FlyBase"/>
</dbReference>
<dbReference type="InterPro" id="IPR004279">
    <property type="entry name" value="Perilipin"/>
</dbReference>
<dbReference type="PANTHER" id="PTHR14024:SF49">
    <property type="entry name" value="LIPID STORAGE DROPLETS SURFACE-BINDING PROTEIN 1"/>
    <property type="match status" value="1"/>
</dbReference>
<dbReference type="PANTHER" id="PTHR14024">
    <property type="entry name" value="PERILIPIN"/>
    <property type="match status" value="1"/>
</dbReference>
<dbReference type="Pfam" id="PF03036">
    <property type="entry name" value="Perilipin"/>
    <property type="match status" value="1"/>
</dbReference>
<dbReference type="PIRSF" id="PIRSF036881">
    <property type="entry name" value="PAT"/>
    <property type="match status" value="1"/>
</dbReference>
<organism>
    <name type="scientific">Drosophila melanogaster</name>
    <name type="common">Fruit fly</name>
    <dbReference type="NCBI Taxonomy" id="7227"/>
    <lineage>
        <taxon>Eukaryota</taxon>
        <taxon>Metazoa</taxon>
        <taxon>Ecdysozoa</taxon>
        <taxon>Arthropoda</taxon>
        <taxon>Hexapoda</taxon>
        <taxon>Insecta</taxon>
        <taxon>Pterygota</taxon>
        <taxon>Neoptera</taxon>
        <taxon>Endopterygota</taxon>
        <taxon>Diptera</taxon>
        <taxon>Brachycera</taxon>
        <taxon>Muscomorpha</taxon>
        <taxon>Ephydroidea</taxon>
        <taxon>Drosophilidae</taxon>
        <taxon>Drosophila</taxon>
        <taxon>Sophophora</taxon>
    </lineage>
</organism>
<protein>
    <recommendedName>
        <fullName>Lipid storage droplets surface-binding protein 1</fullName>
    </recommendedName>
</protein>
<name>LSD1_DROME</name>
<reference evidence="8 10" key="1">
    <citation type="journal article" date="2002" name="J. Biol. Chem.">
        <title>Functional conservation for lipid storage droplet association among Perilipin, ADRP, and TIP47 (PAT)-related proteins in mammals, Drosophila, and Dictyostelium.</title>
        <authorList>
            <person name="Miura S."/>
            <person name="Gan J.-W."/>
            <person name="Brzostowski J."/>
            <person name="Parisi M.J."/>
            <person name="Schultz C.J."/>
            <person name="Londos C."/>
            <person name="Oliver B."/>
            <person name="Kimmel A.R."/>
        </authorList>
    </citation>
    <scope>NUCLEOTIDE SEQUENCE (ISOFORM C)</scope>
    <scope>FUNCTION</scope>
    <scope>SUBCELLULAR LOCATION</scope>
</reference>
<reference evidence="9" key="2">
    <citation type="journal article" date="2000" name="Science">
        <title>The genome sequence of Drosophila melanogaster.</title>
        <authorList>
            <person name="Adams M.D."/>
            <person name="Celniker S.E."/>
            <person name="Holt R.A."/>
            <person name="Evans C.A."/>
            <person name="Gocayne J.D."/>
            <person name="Amanatides P.G."/>
            <person name="Scherer S.E."/>
            <person name="Li P.W."/>
            <person name="Hoskins R.A."/>
            <person name="Galle R.F."/>
            <person name="George R.A."/>
            <person name="Lewis S.E."/>
            <person name="Richards S."/>
            <person name="Ashburner M."/>
            <person name="Henderson S.N."/>
            <person name="Sutton G.G."/>
            <person name="Wortman J.R."/>
            <person name="Yandell M.D."/>
            <person name="Zhang Q."/>
            <person name="Chen L.X."/>
            <person name="Brandon R.C."/>
            <person name="Rogers Y.-H.C."/>
            <person name="Blazej R.G."/>
            <person name="Champe M."/>
            <person name="Pfeiffer B.D."/>
            <person name="Wan K.H."/>
            <person name="Doyle C."/>
            <person name="Baxter E.G."/>
            <person name="Helt G."/>
            <person name="Nelson C.R."/>
            <person name="Miklos G.L.G."/>
            <person name="Abril J.F."/>
            <person name="Agbayani A."/>
            <person name="An H.-J."/>
            <person name="Andrews-Pfannkoch C."/>
            <person name="Baldwin D."/>
            <person name="Ballew R.M."/>
            <person name="Basu A."/>
            <person name="Baxendale J."/>
            <person name="Bayraktaroglu L."/>
            <person name="Beasley E.M."/>
            <person name="Beeson K.Y."/>
            <person name="Benos P.V."/>
            <person name="Berman B.P."/>
            <person name="Bhandari D."/>
            <person name="Bolshakov S."/>
            <person name="Borkova D."/>
            <person name="Botchan M.R."/>
            <person name="Bouck J."/>
            <person name="Brokstein P."/>
            <person name="Brottier P."/>
            <person name="Burtis K.C."/>
            <person name="Busam D.A."/>
            <person name="Butler H."/>
            <person name="Cadieu E."/>
            <person name="Center A."/>
            <person name="Chandra I."/>
            <person name="Cherry J.M."/>
            <person name="Cawley S."/>
            <person name="Dahlke C."/>
            <person name="Davenport L.B."/>
            <person name="Davies P."/>
            <person name="de Pablos B."/>
            <person name="Delcher A."/>
            <person name="Deng Z."/>
            <person name="Mays A.D."/>
            <person name="Dew I."/>
            <person name="Dietz S.M."/>
            <person name="Dodson K."/>
            <person name="Doup L.E."/>
            <person name="Downes M."/>
            <person name="Dugan-Rocha S."/>
            <person name="Dunkov B.C."/>
            <person name="Dunn P."/>
            <person name="Durbin K.J."/>
            <person name="Evangelista C.C."/>
            <person name="Ferraz C."/>
            <person name="Ferriera S."/>
            <person name="Fleischmann W."/>
            <person name="Fosler C."/>
            <person name="Gabrielian A.E."/>
            <person name="Garg N.S."/>
            <person name="Gelbart W.M."/>
            <person name="Glasser K."/>
            <person name="Glodek A."/>
            <person name="Gong F."/>
            <person name="Gorrell J.H."/>
            <person name="Gu Z."/>
            <person name="Guan P."/>
            <person name="Harris M."/>
            <person name="Harris N.L."/>
            <person name="Harvey D.A."/>
            <person name="Heiman T.J."/>
            <person name="Hernandez J.R."/>
            <person name="Houck J."/>
            <person name="Hostin D."/>
            <person name="Houston K.A."/>
            <person name="Howland T.J."/>
            <person name="Wei M.-H."/>
            <person name="Ibegwam C."/>
            <person name="Jalali M."/>
            <person name="Kalush F."/>
            <person name="Karpen G.H."/>
            <person name="Ke Z."/>
            <person name="Kennison J.A."/>
            <person name="Ketchum K.A."/>
            <person name="Kimmel B.E."/>
            <person name="Kodira C.D."/>
            <person name="Kraft C.L."/>
            <person name="Kravitz S."/>
            <person name="Kulp D."/>
            <person name="Lai Z."/>
            <person name="Lasko P."/>
            <person name="Lei Y."/>
            <person name="Levitsky A.A."/>
            <person name="Li J.H."/>
            <person name="Li Z."/>
            <person name="Liang Y."/>
            <person name="Lin X."/>
            <person name="Liu X."/>
            <person name="Mattei B."/>
            <person name="McIntosh T.C."/>
            <person name="McLeod M.P."/>
            <person name="McPherson D."/>
            <person name="Merkulov G."/>
            <person name="Milshina N.V."/>
            <person name="Mobarry C."/>
            <person name="Morris J."/>
            <person name="Moshrefi A."/>
            <person name="Mount S.M."/>
            <person name="Moy M."/>
            <person name="Murphy B."/>
            <person name="Murphy L."/>
            <person name="Muzny D.M."/>
            <person name="Nelson D.L."/>
            <person name="Nelson D.R."/>
            <person name="Nelson K.A."/>
            <person name="Nixon K."/>
            <person name="Nusskern D.R."/>
            <person name="Pacleb J.M."/>
            <person name="Palazzolo M."/>
            <person name="Pittman G.S."/>
            <person name="Pan S."/>
            <person name="Pollard J."/>
            <person name="Puri V."/>
            <person name="Reese M.G."/>
            <person name="Reinert K."/>
            <person name="Remington K."/>
            <person name="Saunders R.D.C."/>
            <person name="Scheeler F."/>
            <person name="Shen H."/>
            <person name="Shue B.C."/>
            <person name="Siden-Kiamos I."/>
            <person name="Simpson M."/>
            <person name="Skupski M.P."/>
            <person name="Smith T.J."/>
            <person name="Spier E."/>
            <person name="Spradling A.C."/>
            <person name="Stapleton M."/>
            <person name="Strong R."/>
            <person name="Sun E."/>
            <person name="Svirskas R."/>
            <person name="Tector C."/>
            <person name="Turner R."/>
            <person name="Venter E."/>
            <person name="Wang A.H."/>
            <person name="Wang X."/>
            <person name="Wang Z.-Y."/>
            <person name="Wassarman D.A."/>
            <person name="Weinstock G.M."/>
            <person name="Weissenbach J."/>
            <person name="Williams S.M."/>
            <person name="Woodage T."/>
            <person name="Worley K.C."/>
            <person name="Wu D."/>
            <person name="Yang S."/>
            <person name="Yao Q.A."/>
            <person name="Ye J."/>
            <person name="Yeh R.-F."/>
            <person name="Zaveri J.S."/>
            <person name="Zhan M."/>
            <person name="Zhang G."/>
            <person name="Zhao Q."/>
            <person name="Zheng L."/>
            <person name="Zheng X.H."/>
            <person name="Zhong F.N."/>
            <person name="Zhong W."/>
            <person name="Zhou X."/>
            <person name="Zhu S.C."/>
            <person name="Zhu X."/>
            <person name="Smith H.O."/>
            <person name="Gibbs R.A."/>
            <person name="Myers E.W."/>
            <person name="Rubin G.M."/>
            <person name="Venter J.C."/>
        </authorList>
    </citation>
    <scope>NUCLEOTIDE SEQUENCE [LARGE SCALE GENOMIC DNA]</scope>
    <source>
        <strain evidence="2">Berkeley</strain>
    </source>
</reference>
<reference evidence="8 9" key="3">
    <citation type="journal article" date="2002" name="Genome Biol.">
        <title>Annotation of the Drosophila melanogaster euchromatic genome: a systematic review.</title>
        <authorList>
            <person name="Misra S."/>
            <person name="Crosby M.A."/>
            <person name="Mungall C.J."/>
            <person name="Matthews B.B."/>
            <person name="Campbell K.S."/>
            <person name="Hradecky P."/>
            <person name="Huang Y."/>
            <person name="Kaminker J.S."/>
            <person name="Millburn G.H."/>
            <person name="Prochnik S.E."/>
            <person name="Smith C.D."/>
            <person name="Tupy J.L."/>
            <person name="Whitfield E.J."/>
            <person name="Bayraktaroglu L."/>
            <person name="Berman B.P."/>
            <person name="Bettencourt B.R."/>
            <person name="Celniker S.E."/>
            <person name="de Grey A.D.N.J."/>
            <person name="Drysdale R.A."/>
            <person name="Harris N.L."/>
            <person name="Richter J."/>
            <person name="Russo S."/>
            <person name="Schroeder A.J."/>
            <person name="Shu S.Q."/>
            <person name="Stapleton M."/>
            <person name="Yamada C."/>
            <person name="Ashburner M."/>
            <person name="Gelbart W.M."/>
            <person name="Rubin G.M."/>
            <person name="Lewis S.E."/>
        </authorList>
    </citation>
    <scope>GENOME REANNOTATION</scope>
    <scope>ALTERNATIVE SPLICING</scope>
    <source>
        <strain>Berkeley</strain>
    </source>
</reference>
<reference evidence="8 11" key="4">
    <citation type="journal article" date="2002" name="Genome Biol.">
        <title>A Drosophila full-length cDNA resource.</title>
        <authorList>
            <person name="Stapleton M."/>
            <person name="Carlson J.W."/>
            <person name="Brokstein P."/>
            <person name="Yu C."/>
            <person name="Champe M."/>
            <person name="George R.A."/>
            <person name="Guarin H."/>
            <person name="Kronmiller B."/>
            <person name="Pacleb J.M."/>
            <person name="Park S."/>
            <person name="Wan K.H."/>
            <person name="Rubin G.M."/>
            <person name="Celniker S.E."/>
        </authorList>
    </citation>
    <scope>NUCLEOTIDE SEQUENCE [LARGE SCALE MRNA] (ISOFORM C)</scope>
    <source>
        <strain evidence="11">Berkeley</strain>
        <tissue evidence="4">Head</tissue>
    </source>
</reference>
<comment type="function">
    <text evidence="6">Required for normal deposition of neutral lipids in the oocyte.</text>
</comment>
<comment type="subcellular location">
    <subcellularLocation>
        <location evidence="3">Cytoplasm</location>
    </subcellularLocation>
    <subcellularLocation>
        <location evidence="3">Lipid droplet</location>
    </subcellularLocation>
    <text>Cytoplasmic and in lipid storage droplets of adipocytes of first instar larvae. Colocalizes with Lsd-2 on the surface of neutral lipid storage droplets in cells of fat bodies.</text>
</comment>
<comment type="alternative products">
    <event type="alternative splicing"/>
    <isoform>
        <id>Q9VCI3-1</id>
        <name evidence="5">A</name>
        <sequence type="displayed"/>
    </isoform>
    <isoform>
        <id>Q9VCI3-2</id>
        <name evidence="5">B</name>
        <sequence type="described" ref="VSP_051638 VSP_051639"/>
    </isoform>
    <isoform>
        <id>Q9VCI3-3</id>
        <name evidence="3">C</name>
        <sequence type="described" ref="VSP_051639"/>
    </isoform>
</comment>
<comment type="similarity">
    <text evidence="8">Belongs to the perilipin family.</text>
</comment>
<keyword id="KW-0025">Alternative splicing</keyword>
<keyword id="KW-0963">Cytoplasm</keyword>
<keyword id="KW-0551">Lipid droplet</keyword>
<keyword id="KW-0445">Lipid transport</keyword>
<keyword id="KW-1185">Reference proteome</keyword>
<keyword id="KW-0813">Transport</keyword>
<proteinExistence type="evidence at transcript level"/>